<proteinExistence type="inferred from homology"/>
<organism>
    <name type="scientific">Staphylococcus aureus (strain Newman)</name>
    <dbReference type="NCBI Taxonomy" id="426430"/>
    <lineage>
        <taxon>Bacteria</taxon>
        <taxon>Bacillati</taxon>
        <taxon>Bacillota</taxon>
        <taxon>Bacilli</taxon>
        <taxon>Bacillales</taxon>
        <taxon>Staphylococcaceae</taxon>
        <taxon>Staphylococcus</taxon>
    </lineage>
</organism>
<gene>
    <name evidence="1" type="primary">rpmJ</name>
    <name type="ordered locus">NWMN_2129</name>
</gene>
<protein>
    <recommendedName>
        <fullName evidence="1">Large ribosomal subunit protein bL36</fullName>
    </recommendedName>
    <alternativeName>
        <fullName evidence="2">50S ribosomal protein L36</fullName>
    </alternativeName>
</protein>
<reference key="1">
    <citation type="journal article" date="2008" name="J. Bacteriol.">
        <title>Genome sequence of Staphylococcus aureus strain Newman and comparative analysis of staphylococcal genomes: polymorphism and evolution of two major pathogenicity islands.</title>
        <authorList>
            <person name="Baba T."/>
            <person name="Bae T."/>
            <person name="Schneewind O."/>
            <person name="Takeuchi F."/>
            <person name="Hiramatsu K."/>
        </authorList>
    </citation>
    <scope>NUCLEOTIDE SEQUENCE [LARGE SCALE GENOMIC DNA]</scope>
    <source>
        <strain>Newman</strain>
    </source>
</reference>
<name>RL36_STAAE</name>
<dbReference type="EMBL" id="AP009351">
    <property type="protein sequence ID" value="BAF68401.1"/>
    <property type="molecule type" value="Genomic_DNA"/>
</dbReference>
<dbReference type="RefSeq" id="WP_000868342.1">
    <property type="nucleotide sequence ID" value="NZ_JBBIAE010000006.1"/>
</dbReference>
<dbReference type="SMR" id="A6QJ69"/>
<dbReference type="GeneID" id="98346539"/>
<dbReference type="KEGG" id="sae:NWMN_2129"/>
<dbReference type="HOGENOM" id="CLU_135723_6_2_9"/>
<dbReference type="Proteomes" id="UP000006386">
    <property type="component" value="Chromosome"/>
</dbReference>
<dbReference type="GO" id="GO:0005737">
    <property type="term" value="C:cytoplasm"/>
    <property type="evidence" value="ECO:0007669"/>
    <property type="project" value="UniProtKB-ARBA"/>
</dbReference>
<dbReference type="GO" id="GO:1990904">
    <property type="term" value="C:ribonucleoprotein complex"/>
    <property type="evidence" value="ECO:0007669"/>
    <property type="project" value="UniProtKB-KW"/>
</dbReference>
<dbReference type="GO" id="GO:0005840">
    <property type="term" value="C:ribosome"/>
    <property type="evidence" value="ECO:0007669"/>
    <property type="project" value="UniProtKB-KW"/>
</dbReference>
<dbReference type="GO" id="GO:0003735">
    <property type="term" value="F:structural constituent of ribosome"/>
    <property type="evidence" value="ECO:0007669"/>
    <property type="project" value="InterPro"/>
</dbReference>
<dbReference type="GO" id="GO:0006412">
    <property type="term" value="P:translation"/>
    <property type="evidence" value="ECO:0007669"/>
    <property type="project" value="UniProtKB-UniRule"/>
</dbReference>
<dbReference type="HAMAP" id="MF_00251">
    <property type="entry name" value="Ribosomal_bL36"/>
    <property type="match status" value="1"/>
</dbReference>
<dbReference type="InterPro" id="IPR000473">
    <property type="entry name" value="Ribosomal_bL36"/>
</dbReference>
<dbReference type="InterPro" id="IPR035977">
    <property type="entry name" value="Ribosomal_bL36_sp"/>
</dbReference>
<dbReference type="NCBIfam" id="TIGR01022">
    <property type="entry name" value="rpmJ_bact"/>
    <property type="match status" value="1"/>
</dbReference>
<dbReference type="PANTHER" id="PTHR42888">
    <property type="entry name" value="50S RIBOSOMAL PROTEIN L36, CHLOROPLASTIC"/>
    <property type="match status" value="1"/>
</dbReference>
<dbReference type="PANTHER" id="PTHR42888:SF1">
    <property type="entry name" value="LARGE RIBOSOMAL SUBUNIT PROTEIN BL36C"/>
    <property type="match status" value="1"/>
</dbReference>
<dbReference type="Pfam" id="PF00444">
    <property type="entry name" value="Ribosomal_L36"/>
    <property type="match status" value="1"/>
</dbReference>
<dbReference type="SUPFAM" id="SSF57840">
    <property type="entry name" value="Ribosomal protein L36"/>
    <property type="match status" value="1"/>
</dbReference>
<dbReference type="PROSITE" id="PS00828">
    <property type="entry name" value="RIBOSOMAL_L36"/>
    <property type="match status" value="1"/>
</dbReference>
<sequence length="37" mass="4305">MKVRPSVKPICEKCKVIKRKGKVMVICENPKHKQRQG</sequence>
<evidence type="ECO:0000255" key="1">
    <source>
        <dbReference type="HAMAP-Rule" id="MF_00251"/>
    </source>
</evidence>
<evidence type="ECO:0000305" key="2"/>
<accession>A6QJ69</accession>
<keyword id="KW-0687">Ribonucleoprotein</keyword>
<keyword id="KW-0689">Ribosomal protein</keyword>
<comment type="similarity">
    <text evidence="1">Belongs to the bacterial ribosomal protein bL36 family.</text>
</comment>
<feature type="chain" id="PRO_1000071865" description="Large ribosomal subunit protein bL36">
    <location>
        <begin position="1"/>
        <end position="37"/>
    </location>
</feature>